<accession>O08638</accession>
<accession>O08639</accession>
<accession>Q62462</accession>
<accession>Q64195</accession>
<organism>
    <name type="scientific">Mus musculus</name>
    <name type="common">Mouse</name>
    <dbReference type="NCBI Taxonomy" id="10090"/>
    <lineage>
        <taxon>Eukaryota</taxon>
        <taxon>Metazoa</taxon>
        <taxon>Chordata</taxon>
        <taxon>Craniata</taxon>
        <taxon>Vertebrata</taxon>
        <taxon>Euteleostomi</taxon>
        <taxon>Mammalia</taxon>
        <taxon>Eutheria</taxon>
        <taxon>Euarchontoglires</taxon>
        <taxon>Glires</taxon>
        <taxon>Rodentia</taxon>
        <taxon>Myomorpha</taxon>
        <taxon>Muroidea</taxon>
        <taxon>Muridae</taxon>
        <taxon>Murinae</taxon>
        <taxon>Mus</taxon>
        <taxon>Mus</taxon>
    </lineage>
</organism>
<reference key="1">
    <citation type="journal article" date="1997" name="Biochem. Biophys. Res. Commun.">
        <title>Molecular cloning and expression of murine smooth muscle myosin heavy chains.</title>
        <authorList>
            <person name="Hasegawa K."/>
            <person name="Arakawa E."/>
            <person name="Oda S."/>
            <person name="Matsuda Y."/>
        </authorList>
    </citation>
    <scope>NUCLEOTIDE SEQUENCE [MRNA]</scope>
    <source>
        <strain>BALB/cJ</strain>
        <tissue>Uterus</tissue>
    </source>
</reference>
<reference key="2">
    <citation type="journal article" date="1994" name="Circ. Res.">
        <title>Smooth muscle myosin heavy chain exclusively marks the smooth muscle lineage during mouse embryogenesis.</title>
        <authorList>
            <person name="Miano J.M."/>
            <person name="Cserjesi P."/>
            <person name="Ligon K.L."/>
            <person name="Periasamy M."/>
            <person name="Olson E.N."/>
        </authorList>
    </citation>
    <scope>NUCLEOTIDE SEQUENCE [MRNA] OF 1-368</scope>
    <source>
        <tissue>Uterus</tissue>
    </source>
</reference>
<reference key="3">
    <citation type="journal article" date="1996" name="Circ. Res.">
        <title>Preferential differentiation of P19 mouse embryonal carcinoma cells into smooth muscle cells. Use of retinoic acid and antisense against the central nervous system-specific POU transcription factor Brn-2.</title>
        <authorList>
            <person name="Suzuki T."/>
            <person name="Kim H.S."/>
            <person name="Kurabayashi M."/>
            <person name="Hamada H."/>
            <person name="Fujii H."/>
            <person name="Aikawa M."/>
            <person name="Watanabe M."/>
            <person name="Watanabe N."/>
            <person name="Sakomura Y."/>
            <person name="Yazaki Y."/>
            <person name="Nagai R."/>
        </authorList>
    </citation>
    <scope>NUCLEOTIDE SEQUENCE [MRNA] OF 1-126</scope>
    <source>
        <tissue>Uterus</tissue>
    </source>
</reference>
<reference key="4">
    <citation type="submission" date="2009-01" db="UniProtKB">
        <authorList>
            <person name="Lubec G."/>
            <person name="Sunyer B."/>
            <person name="Chen W.-Q."/>
        </authorList>
    </citation>
    <scope>PROTEIN SEQUENCE OF 1218-1224</scope>
    <scope>IDENTIFICATION BY MASS SPECTROMETRY</scope>
    <source>
        <strain>OF1</strain>
        <tissue>Hippocampus</tissue>
    </source>
</reference>
<reference key="5">
    <citation type="journal article" date="2007" name="Proc. Natl. Acad. Sci. U.S.A.">
        <title>Large-scale phosphorylation analysis of mouse liver.</title>
        <authorList>
            <person name="Villen J."/>
            <person name="Beausoleil S.A."/>
            <person name="Gerber S.A."/>
            <person name="Gygi S.P."/>
        </authorList>
    </citation>
    <scope>PHOSPHORYLATION [LARGE SCALE ANALYSIS] AT SER-8; THR-1951 AND SER-1954</scope>
    <scope>IDENTIFICATION BY MASS SPECTROMETRY [LARGE SCALE ANALYSIS]</scope>
    <source>
        <tissue>Liver</tissue>
    </source>
</reference>
<reference key="6">
    <citation type="journal article" date="2010" name="Cell">
        <title>A tissue-specific atlas of mouse protein phosphorylation and expression.</title>
        <authorList>
            <person name="Huttlin E.L."/>
            <person name="Jedrychowski M.P."/>
            <person name="Elias J.E."/>
            <person name="Goswami T."/>
            <person name="Rad R."/>
            <person name="Beausoleil S.A."/>
            <person name="Villen J."/>
            <person name="Haas W."/>
            <person name="Sowa M.E."/>
            <person name="Gygi S.P."/>
        </authorList>
    </citation>
    <scope>PHOSPHORYLATION [LARGE SCALE ANALYSIS] AT SER-8; THR-1951; SER-1954 AND SER-1971</scope>
    <scope>IDENTIFICATION BY MASS SPECTROMETRY [LARGE SCALE ANALYSIS]</scope>
    <source>
        <tissue>Brain</tissue>
        <tissue>Brown adipose tissue</tissue>
        <tissue>Heart</tissue>
        <tissue>Kidney</tissue>
        <tissue>Liver</tissue>
        <tissue>Lung</tissue>
        <tissue>Pancreas</tissue>
        <tissue>Spleen</tissue>
        <tissue>Testis</tissue>
    </source>
</reference>
<protein>
    <recommendedName>
        <fullName>Myosin-11</fullName>
    </recommendedName>
    <alternativeName>
        <fullName>Myosin heavy chain 11</fullName>
    </alternativeName>
    <alternativeName>
        <fullName>Myosin heavy chain, smooth muscle isoform</fullName>
    </alternativeName>
    <alternativeName>
        <fullName>SMMHC</fullName>
    </alternativeName>
</protein>
<keyword id="KW-0009">Actin-binding</keyword>
<keyword id="KW-0025">Alternative splicing</keyword>
<keyword id="KW-0067">ATP-binding</keyword>
<keyword id="KW-0112">Calmodulin-binding</keyword>
<keyword id="KW-0175">Coiled coil</keyword>
<keyword id="KW-0963">Cytoplasm</keyword>
<keyword id="KW-0903">Direct protein sequencing</keyword>
<keyword id="KW-0488">Methylation</keyword>
<keyword id="KW-0505">Motor protein</keyword>
<keyword id="KW-0514">Muscle protein</keyword>
<keyword id="KW-0518">Myosin</keyword>
<keyword id="KW-0547">Nucleotide-binding</keyword>
<keyword id="KW-0597">Phosphoprotein</keyword>
<keyword id="KW-1185">Reference proteome</keyword>
<keyword id="KW-0787">Thick filament</keyword>
<feature type="chain" id="PRO_0000123425" description="Myosin-11">
    <location>
        <begin position="1"/>
        <end position="1972"/>
    </location>
</feature>
<feature type="domain" description="Myosin N-terminal SH3-like" evidence="8">
    <location>
        <begin position="31"/>
        <end position="81"/>
    </location>
</feature>
<feature type="domain" description="Myosin motor" evidence="7">
    <location>
        <begin position="85"/>
        <end position="783"/>
    </location>
</feature>
<feature type="domain" description="IQ" evidence="6">
    <location>
        <begin position="786"/>
        <end position="815"/>
    </location>
</feature>
<feature type="region of interest" description="Actin-binding" evidence="1">
    <location>
        <begin position="661"/>
        <end position="683"/>
    </location>
</feature>
<feature type="region of interest" description="Actin-binding" evidence="1">
    <location>
        <begin position="762"/>
        <end position="776"/>
    </location>
</feature>
<feature type="region of interest" description="Disordered" evidence="9">
    <location>
        <begin position="1771"/>
        <end position="1797"/>
    </location>
</feature>
<feature type="region of interest" description="Disordered" evidence="9">
    <location>
        <begin position="1867"/>
        <end position="1972"/>
    </location>
</feature>
<feature type="region of interest" description="C-terminal">
    <location>
        <begin position="1935"/>
        <end position="1972"/>
    </location>
</feature>
<feature type="coiled-coil region" evidence="5">
    <location>
        <begin position="844"/>
        <end position="1934"/>
    </location>
</feature>
<feature type="compositionally biased region" description="Polar residues" evidence="9">
    <location>
        <begin position="1771"/>
        <end position="1788"/>
    </location>
</feature>
<feature type="compositionally biased region" description="Basic and acidic residues" evidence="9">
    <location>
        <begin position="1867"/>
        <end position="1876"/>
    </location>
</feature>
<feature type="binding site" evidence="5">
    <location>
        <begin position="178"/>
        <end position="185"/>
    </location>
    <ligand>
        <name>ATP</name>
        <dbReference type="ChEBI" id="CHEBI:30616"/>
    </ligand>
</feature>
<feature type="modified residue" description="Phosphoserine" evidence="11 12">
    <location>
        <position position="8"/>
    </location>
</feature>
<feature type="modified residue" description="Phosphoserine" evidence="2">
    <location>
        <position position="23"/>
    </location>
</feature>
<feature type="modified residue" description="Phosphoserine" evidence="4">
    <location>
        <position position="40"/>
    </location>
</feature>
<feature type="modified residue" description="N6,N6,N6-trimethyllysine" evidence="5">
    <location>
        <position position="129"/>
    </location>
</feature>
<feature type="modified residue" description="Phosphothreonine" evidence="4">
    <location>
        <position position="1177"/>
    </location>
</feature>
<feature type="modified residue" description="Phosphoserine" evidence="3">
    <location>
        <position position="1684"/>
    </location>
</feature>
<feature type="modified residue" description="Phosphoserine" evidence="3">
    <location>
        <position position="1722"/>
    </location>
</feature>
<feature type="modified residue" description="Phosphothreonine" evidence="11 12">
    <location>
        <position position="1951"/>
    </location>
</feature>
<feature type="modified residue" description="Phosphoserine" evidence="11 12">
    <location>
        <position position="1954"/>
    </location>
</feature>
<feature type="modified residue" description="Phosphoserine" evidence="12">
    <location>
        <position position="1971"/>
    </location>
</feature>
<feature type="splice variant" id="VSP_003346" description="In isoform 2." evidence="10">
    <original>RGNEASFVPSRRAGGRRVIENTDGSEEEMDARDSDFNGTKASE</original>
    <variation>GPPPQETSQ</variation>
    <location>
        <begin position="1930"/>
        <end position="1972"/>
    </location>
</feature>
<feature type="sequence conflict" description="In Ref. 3; AAB36168." evidence="10" ref="3">
    <original>N</original>
    <variation>D</variation>
    <location>
        <position position="126"/>
    </location>
</feature>
<feature type="sequence conflict" description="In Ref. 2; AAA67552." evidence="10" ref="2">
    <original>A</original>
    <variation>V</variation>
    <location>
        <position position="161"/>
    </location>
</feature>
<feature type="sequence conflict" description="In Ref. 2; AAA67552." evidence="10" ref="2">
    <original>Q</original>
    <variation>K</variation>
    <location>
        <position position="189"/>
    </location>
</feature>
<proteinExistence type="evidence at protein level"/>
<name>MYH11_MOUSE</name>
<sequence length="1972" mass="227028">MAQKGQLSDDEKFLFVDKNFMNSPMAQADWVAKKLVWVPSEKQGFEAASIKEEKGDEVVVELVENGKKVTVGKDDIQKMNPPKFSKVEDMAELTCLNEASVLHNLRERYFSGLIYTYSGLFCVVVNPYKYLPIYSEKIVDMYKGKKRHEMPPHIYAIADTAYRSMLQDREDQSILCTGESGAGKTENTQKVIQYLAVVASSHKGKKDSSITGELEKQLLQANPILEAFGNAKTVKNDNSSRFGKFIRINFDVTGYIVGANIETYLLEKSRAIRQARDERTFHIFYYLLAGAKEKMKSDLLLESFNSYTFLSNGFVPIPAAQDDEMFQETLEAMSIMGFNEEEQLAILKVVSSVLQLGNIVFKKERNTDQASMPDNTAAQKVCHLVGINVTDFTRAILTPRIKVGRDVVQKAQTKEQADFAIEALAKATYERLFRWILSRVNKALDKTHRQGASFLGILDIAGFEIFEVNSFEQLCINYTNEKLQQLFNHTMFILEQEEYQREGIEWNFIDFGLDLQPSIELIERPNNPPGVLALLDEECWFPKATDKSFVEKLCSEQGNHPKFQKPKQLKDKTEFSIIHYAGKVDYNASAWLTKNMDPLNDNVTSLLNASSDKFVADLWKDVDRIVGLDQMAKMTESSLPSASKTKKGMFRTVGQLYKEQLGKLMATLRNTTANFVRCIIPNHEKRSGKLDAFLVLEQLRCNGVLEGIRICRQGFPNRIVFQEFRQRYEILAANAIPKGFMDGKQACILMIKALELDPNLYRIGQSKIFFRTGVLAHLEEERDLKITDVIMAFQAMCRGYLARKAFTKRQQQLTAMKVIQRNCAAYLKLRNWQWWRLFTKVKPLLQVTRQEEEMQAKEEEMQKITERQQKAETELKELEQKHTQLAEEKTLLQEQLQAETELYAESEEMRVRLAAKKQELEEILHEMEARLEEEEDRRQQLQAERKKMAQQMLDLEEQLEEEEAARQKLQLEKVTAEAKIKKLEDDILVMDDQNSKLSKERKLLEERVSDLTTNLAEEEEKAKNLTKLKSKHESMISELEVRLKKEEKSRQELEKLKRKLEGDASDFHEQIADLQAQIAELKMQLAKKEEELQAALARLDEEIAQKNNALKKIRELEGHISDLQEDLDSERAARNKAEKQKRDLGEELEALKTELEDTLDSTATQQELRAKREQEVTVLKKALDEETRSHEAQVQEMRQKHTQAVEELTEQLEQFKRAKANLDKSKQTLEKENADLAGELRVLGQAKQEVEHKKKKLEVQLQDLQSKCSDGERARAELSDKVHKLQNEVESVTGMLNEAEGKAIKLAKDVASLGSQLQDTQELLQEETRQKLNVSTKLRQLEDERNSLQDQLDEEMEAKQNLERHVSTLNIQLSDSKKKLQDFASTIEVMEEGKKRLQKEMEGLSQQYEEKAAAYDKLEKTKNRLQQELDDLVVDLDNQRQLVSNLEKKQKKFDQLLAEEKNISSKYADERDRAEAEAREKETKALSLARALEEALEAKEELERTNKMLKAEMEDLVSSKDDVGKNVHELEKSKRALETQMEEMKTQLEESEDDVQATEDAKLRLEVNMQALKGQFERDLQARDEQNEEKRRQLQRQLHEYETELEDERKQRALAAAAKKKLEGDLKDLELQADSAIKGREEAIKQLRKLQAQMKDFQRELDDARASRDEIFATSKENEKKAKSLEADLMQLQEDLAAAERARKQADLEKEELAEELASSLSGRNTLQDEKRRLEARIAQLEEELEEEQGNMEAMSDRVRKATLQAEQLSNELATERSTAQKNESARQQLERQNKELRSKLQEVEGAVKAKLKSTVAALEAKIAQLEEQVEQEAREKQAATKSLKQKDKKLKEVLLQVEDERKMAEQYKEQAEKGNTKVKQLKRQLEEAEEESQCINANRRKLQRELDEATESNEAMGREVNALKSKLRRGNEASFVPSRRAGGRRVIENTDGSEEEMDARDSDFNGTKASE</sequence>
<evidence type="ECO:0000250" key="1"/>
<evidence type="ECO:0000250" key="2">
    <source>
        <dbReference type="UniProtKB" id="P35749"/>
    </source>
</evidence>
<evidence type="ECO:0000250" key="3">
    <source>
        <dbReference type="UniProtKB" id="Q63862"/>
    </source>
</evidence>
<evidence type="ECO:0000250" key="4">
    <source>
        <dbReference type="UniProtKB" id="Q7Z406"/>
    </source>
</evidence>
<evidence type="ECO:0000255" key="5"/>
<evidence type="ECO:0000255" key="6">
    <source>
        <dbReference type="PROSITE-ProRule" id="PRU00116"/>
    </source>
</evidence>
<evidence type="ECO:0000255" key="7">
    <source>
        <dbReference type="PROSITE-ProRule" id="PRU00782"/>
    </source>
</evidence>
<evidence type="ECO:0000255" key="8">
    <source>
        <dbReference type="PROSITE-ProRule" id="PRU01190"/>
    </source>
</evidence>
<evidence type="ECO:0000256" key="9">
    <source>
        <dbReference type="SAM" id="MobiDB-lite"/>
    </source>
</evidence>
<evidence type="ECO:0000305" key="10"/>
<evidence type="ECO:0007744" key="11">
    <source>
    </source>
</evidence>
<evidence type="ECO:0007744" key="12">
    <source>
    </source>
</evidence>
<gene>
    <name type="primary">Myh11</name>
</gene>
<dbReference type="EMBL" id="D85923">
    <property type="protein sequence ID" value="BAA19690.1"/>
    <property type="molecule type" value="mRNA"/>
</dbReference>
<dbReference type="EMBL" id="D85924">
    <property type="protein sequence ID" value="BAA19691.1"/>
    <property type="molecule type" value="mRNA"/>
</dbReference>
<dbReference type="EMBL" id="L25860">
    <property type="protein sequence ID" value="AAA67552.1"/>
    <property type="molecule type" value="mRNA"/>
</dbReference>
<dbReference type="EMBL" id="S81516">
    <property type="protein sequence ID" value="AAB36168.1"/>
    <property type="molecule type" value="mRNA"/>
</dbReference>
<dbReference type="CCDS" id="CCDS27972.1">
    <molecule id="O08638-2"/>
</dbReference>
<dbReference type="CCDS" id="CCDS88881.1">
    <molecule id="O08638-1"/>
</dbReference>
<dbReference type="PIR" id="I52863">
    <property type="entry name" value="I52863"/>
</dbReference>
<dbReference type="PIR" id="JC5420">
    <property type="entry name" value="JC5420"/>
</dbReference>
<dbReference type="PIR" id="JC5421">
    <property type="entry name" value="JC5421"/>
</dbReference>
<dbReference type="SMR" id="O08638"/>
<dbReference type="FunCoup" id="O08638">
    <property type="interactions" value="169"/>
</dbReference>
<dbReference type="IntAct" id="O08638">
    <property type="interactions" value="9"/>
</dbReference>
<dbReference type="STRING" id="10090.ENSMUSP00000155052"/>
<dbReference type="GlyGen" id="O08638">
    <property type="glycosylation" value="1 site, 1 O-linked glycan (1 site)"/>
</dbReference>
<dbReference type="iPTMnet" id="O08638"/>
<dbReference type="PhosphoSitePlus" id="O08638"/>
<dbReference type="SwissPalm" id="O08638"/>
<dbReference type="jPOST" id="O08638"/>
<dbReference type="PaxDb" id="10090-ENSMUSP00000087756"/>
<dbReference type="PeptideAtlas" id="O08638"/>
<dbReference type="ProteomicsDB" id="287654">
    <molecule id="O08638-1"/>
</dbReference>
<dbReference type="ProteomicsDB" id="287655">
    <molecule id="O08638-2"/>
</dbReference>
<dbReference type="Pumba" id="O08638"/>
<dbReference type="AGR" id="MGI:102643"/>
<dbReference type="MGI" id="MGI:102643">
    <property type="gene designation" value="Myh11"/>
</dbReference>
<dbReference type="eggNOG" id="KOG0161">
    <property type="taxonomic scope" value="Eukaryota"/>
</dbReference>
<dbReference type="InParanoid" id="O08638"/>
<dbReference type="PhylomeDB" id="O08638"/>
<dbReference type="Reactome" id="R-MMU-445355">
    <property type="pathway name" value="Smooth Muscle Contraction"/>
</dbReference>
<dbReference type="Reactome" id="R-MMU-5627123">
    <property type="pathway name" value="RHO GTPases activate PAKs"/>
</dbReference>
<dbReference type="CD-CODE" id="CE726F99">
    <property type="entry name" value="Postsynaptic density"/>
</dbReference>
<dbReference type="ChiTaRS" id="Myh11">
    <property type="organism name" value="mouse"/>
</dbReference>
<dbReference type="PRO" id="PR:O08638"/>
<dbReference type="Proteomes" id="UP000000589">
    <property type="component" value="Unplaced"/>
</dbReference>
<dbReference type="RNAct" id="O08638">
    <property type="molecule type" value="protein"/>
</dbReference>
<dbReference type="GO" id="GO:0005903">
    <property type="term" value="C:brush border"/>
    <property type="evidence" value="ECO:0000314"/>
    <property type="project" value="UniProtKB"/>
</dbReference>
<dbReference type="GO" id="GO:0042470">
    <property type="term" value="C:melanosome"/>
    <property type="evidence" value="ECO:0007669"/>
    <property type="project" value="UniProtKB-SubCell"/>
</dbReference>
<dbReference type="GO" id="GO:0005859">
    <property type="term" value="C:muscle myosin complex"/>
    <property type="evidence" value="ECO:0000314"/>
    <property type="project" value="MGI"/>
</dbReference>
<dbReference type="GO" id="GO:0030016">
    <property type="term" value="C:myofibril"/>
    <property type="evidence" value="ECO:0007669"/>
    <property type="project" value="UniProtKB-SubCell"/>
</dbReference>
<dbReference type="GO" id="GO:0016459">
    <property type="term" value="C:myosin complex"/>
    <property type="evidence" value="ECO:0000314"/>
    <property type="project" value="MGI"/>
</dbReference>
<dbReference type="GO" id="GO:0032982">
    <property type="term" value="C:myosin filament"/>
    <property type="evidence" value="ECO:0007669"/>
    <property type="project" value="UniProtKB-KW"/>
</dbReference>
<dbReference type="GO" id="GO:0030485">
    <property type="term" value="C:smooth muscle contractile fiber"/>
    <property type="evidence" value="ECO:0000314"/>
    <property type="project" value="MGI"/>
</dbReference>
<dbReference type="GO" id="GO:0001725">
    <property type="term" value="C:stress fiber"/>
    <property type="evidence" value="ECO:0000314"/>
    <property type="project" value="MGI"/>
</dbReference>
<dbReference type="GO" id="GO:0051015">
    <property type="term" value="F:actin filament binding"/>
    <property type="evidence" value="ECO:0007669"/>
    <property type="project" value="InterPro"/>
</dbReference>
<dbReference type="GO" id="GO:0005524">
    <property type="term" value="F:ATP binding"/>
    <property type="evidence" value="ECO:0007669"/>
    <property type="project" value="UniProtKB-KW"/>
</dbReference>
<dbReference type="GO" id="GO:0005516">
    <property type="term" value="F:calmodulin binding"/>
    <property type="evidence" value="ECO:0007669"/>
    <property type="project" value="UniProtKB-KW"/>
</dbReference>
<dbReference type="GO" id="GO:0003774">
    <property type="term" value="F:cytoskeletal motor activity"/>
    <property type="evidence" value="ECO:0000315"/>
    <property type="project" value="MGI"/>
</dbReference>
<dbReference type="GO" id="GO:0008307">
    <property type="term" value="F:structural constituent of muscle"/>
    <property type="evidence" value="ECO:0000250"/>
    <property type="project" value="UniProtKB"/>
</dbReference>
<dbReference type="GO" id="GO:0055013">
    <property type="term" value="P:cardiac muscle cell development"/>
    <property type="evidence" value="ECO:0000250"/>
    <property type="project" value="UniProtKB"/>
</dbReference>
<dbReference type="GO" id="GO:0048251">
    <property type="term" value="P:elastic fiber assembly"/>
    <property type="evidence" value="ECO:0000250"/>
    <property type="project" value="UniProtKB"/>
</dbReference>
<dbReference type="GO" id="GO:0030241">
    <property type="term" value="P:skeletal muscle myosin thick filament assembly"/>
    <property type="evidence" value="ECO:0000250"/>
    <property type="project" value="UniProtKB"/>
</dbReference>
<dbReference type="GO" id="GO:0006939">
    <property type="term" value="P:smooth muscle contraction"/>
    <property type="evidence" value="ECO:0000314"/>
    <property type="project" value="MGI"/>
</dbReference>
<dbReference type="CDD" id="cd14921">
    <property type="entry name" value="MYSc_Myh11"/>
    <property type="match status" value="1"/>
</dbReference>
<dbReference type="FunFam" id="2.30.30.360:FF:000001">
    <property type="entry name" value="Myosin heavy chain"/>
    <property type="match status" value="1"/>
</dbReference>
<dbReference type="FunFam" id="3.30.70.1590:FF:000001">
    <property type="entry name" value="Myosin heavy chain"/>
    <property type="match status" value="1"/>
</dbReference>
<dbReference type="FunFam" id="1.10.10.820:FF:000002">
    <property type="entry name" value="Myosin heavy chain 10"/>
    <property type="match status" value="1"/>
</dbReference>
<dbReference type="FunFam" id="1.20.120.720:FF:000002">
    <property type="entry name" value="Myosin heavy chain 10"/>
    <property type="match status" value="1"/>
</dbReference>
<dbReference type="FunFam" id="1.20.5.4820:FF:000002">
    <property type="entry name" value="Myosin heavy chain 10"/>
    <property type="match status" value="1"/>
</dbReference>
<dbReference type="FunFam" id="1.20.58.530:FF:000003">
    <property type="entry name" value="Myosin heavy chain 10"/>
    <property type="match status" value="1"/>
</dbReference>
<dbReference type="FunFam" id="1.20.5.340:FF:000008">
    <property type="entry name" value="Myosin heavy chain 11"/>
    <property type="match status" value="1"/>
</dbReference>
<dbReference type="FunFam" id="1.20.5.340:FF:000007">
    <property type="entry name" value="Myosin heavy chain, non-muscle"/>
    <property type="match status" value="1"/>
</dbReference>
<dbReference type="FunFam" id="4.10.270.10:FF:000001">
    <property type="entry name" value="Myosin heavy chain, non-muscle"/>
    <property type="match status" value="1"/>
</dbReference>
<dbReference type="FunFam" id="1.20.5.340:FF:000009">
    <property type="entry name" value="myosin-11 isoform X2"/>
    <property type="match status" value="1"/>
</dbReference>
<dbReference type="FunFam" id="1.20.5.340:FF:000027">
    <property type="entry name" value="myosin-11 isoform X2"/>
    <property type="match status" value="1"/>
</dbReference>
<dbReference type="FunFam" id="3.40.850.10:FF:000101">
    <property type="entry name" value="Slow myosin heavy chain 2"/>
    <property type="match status" value="1"/>
</dbReference>
<dbReference type="Gene3D" id="1.10.10.820">
    <property type="match status" value="1"/>
</dbReference>
<dbReference type="Gene3D" id="1.20.5.170">
    <property type="match status" value="1"/>
</dbReference>
<dbReference type="Gene3D" id="1.20.5.340">
    <property type="match status" value="4"/>
</dbReference>
<dbReference type="Gene3D" id="1.20.58.530">
    <property type="match status" value="1"/>
</dbReference>
<dbReference type="Gene3D" id="3.30.70.1590">
    <property type="match status" value="1"/>
</dbReference>
<dbReference type="Gene3D" id="6.10.250.2420">
    <property type="match status" value="1"/>
</dbReference>
<dbReference type="Gene3D" id="3.40.850.10">
    <property type="entry name" value="Kinesin motor domain"/>
    <property type="match status" value="1"/>
</dbReference>
<dbReference type="Gene3D" id="2.30.30.360">
    <property type="entry name" value="Myosin S1 fragment, N-terminal"/>
    <property type="match status" value="1"/>
</dbReference>
<dbReference type="Gene3D" id="1.20.120.720">
    <property type="entry name" value="Myosin VI head, motor domain, U50 subdomain"/>
    <property type="match status" value="1"/>
</dbReference>
<dbReference type="Gene3D" id="4.10.270.10">
    <property type="entry name" value="Myosin, subunit A"/>
    <property type="match status" value="1"/>
</dbReference>
<dbReference type="InterPro" id="IPR036961">
    <property type="entry name" value="Kinesin_motor_dom_sf"/>
</dbReference>
<dbReference type="InterPro" id="IPR001609">
    <property type="entry name" value="Myosin_head_motor_dom-like"/>
</dbReference>
<dbReference type="InterPro" id="IPR004009">
    <property type="entry name" value="Myosin_N"/>
</dbReference>
<dbReference type="InterPro" id="IPR008989">
    <property type="entry name" value="Myosin_S1_N"/>
</dbReference>
<dbReference type="InterPro" id="IPR002928">
    <property type="entry name" value="Myosin_tail"/>
</dbReference>
<dbReference type="InterPro" id="IPR027417">
    <property type="entry name" value="P-loop_NTPase"/>
</dbReference>
<dbReference type="PANTHER" id="PTHR45615">
    <property type="entry name" value="MYOSIN HEAVY CHAIN, NON-MUSCLE"/>
    <property type="match status" value="1"/>
</dbReference>
<dbReference type="PANTHER" id="PTHR45615:SF23">
    <property type="entry name" value="MYOSIN-11"/>
    <property type="match status" value="1"/>
</dbReference>
<dbReference type="Pfam" id="PF00063">
    <property type="entry name" value="Myosin_head"/>
    <property type="match status" value="1"/>
</dbReference>
<dbReference type="Pfam" id="PF02736">
    <property type="entry name" value="Myosin_N"/>
    <property type="match status" value="1"/>
</dbReference>
<dbReference type="Pfam" id="PF01576">
    <property type="entry name" value="Myosin_tail_1"/>
    <property type="match status" value="1"/>
</dbReference>
<dbReference type="PRINTS" id="PR00193">
    <property type="entry name" value="MYOSINHEAVY"/>
</dbReference>
<dbReference type="SMART" id="SM00242">
    <property type="entry name" value="MYSc"/>
    <property type="match status" value="1"/>
</dbReference>
<dbReference type="SUPFAM" id="SSF90257">
    <property type="entry name" value="Myosin rod fragments"/>
    <property type="match status" value="6"/>
</dbReference>
<dbReference type="SUPFAM" id="SSF52540">
    <property type="entry name" value="P-loop containing nucleoside triphosphate hydrolases"/>
    <property type="match status" value="1"/>
</dbReference>
<dbReference type="PROSITE" id="PS50096">
    <property type="entry name" value="IQ"/>
    <property type="match status" value="1"/>
</dbReference>
<dbReference type="PROSITE" id="PS51456">
    <property type="entry name" value="MYOSIN_MOTOR"/>
    <property type="match status" value="1"/>
</dbReference>
<dbReference type="PROSITE" id="PS51844">
    <property type="entry name" value="SH3_LIKE"/>
    <property type="match status" value="1"/>
</dbReference>
<comment type="function">
    <text>Muscle contraction.</text>
</comment>
<comment type="subunit">
    <text>Muscle myosin is a hexameric protein that consists of 2 heavy chain subunits (MHC), 2 alkali light chain subunits (MLC) and 2 regulatory light chain subunits (MLC-2).</text>
</comment>
<comment type="subcellular location">
    <subcellularLocation>
        <location evidence="1">Melanosome</location>
    </subcellularLocation>
    <subcellularLocation>
        <location>Cytoplasm</location>
        <location>Myofibril</location>
    </subcellularLocation>
    <text>Thick filaments of the myofibrils.</text>
</comment>
<comment type="alternative products">
    <event type="alternative splicing"/>
    <isoform>
        <id>O08638-1</id>
        <name>1</name>
        <sequence type="displayed"/>
    </isoform>
    <isoform>
        <id>O08638-2</id>
        <name>2</name>
        <sequence type="described" ref="VSP_003346"/>
    </isoform>
</comment>
<comment type="domain">
    <text>The rodlike tail sequence is highly repetitive, showing cycles of a 28-residue repeat pattern composed of 4 heptapeptides, characteristic for alpha-helical coiled coils.</text>
</comment>
<comment type="domain">
    <text evidence="10">Limited proteolysis of myosin heavy chain produces 1 light meromyosin (LMM) and 1 heavy meromyosin (HMM). HMM can be further cleaved into 2 globular subfragments (S1) and 1 rod-shaped subfragment (S2).</text>
</comment>
<comment type="similarity">
    <text evidence="10">Belongs to the TRAFAC class myosin-kinesin ATPase superfamily. Myosin family.</text>
</comment>